<organism>
    <name type="scientific">Yersinia pestis</name>
    <dbReference type="NCBI Taxonomy" id="632"/>
    <lineage>
        <taxon>Bacteria</taxon>
        <taxon>Pseudomonadati</taxon>
        <taxon>Pseudomonadota</taxon>
        <taxon>Gammaproteobacteria</taxon>
        <taxon>Enterobacterales</taxon>
        <taxon>Yersiniaceae</taxon>
        <taxon>Yersinia</taxon>
    </lineage>
</organism>
<dbReference type="EC" id="6.3.3.1" evidence="1"/>
<dbReference type="EMBL" id="AL590842">
    <property type="protein sequence ID" value="CAL21441.1"/>
    <property type="molecule type" value="Genomic_DNA"/>
</dbReference>
<dbReference type="EMBL" id="AE009952">
    <property type="protein sequence ID" value="AAM84979.1"/>
    <property type="molecule type" value="Genomic_DNA"/>
</dbReference>
<dbReference type="EMBL" id="AE017042">
    <property type="protein sequence ID" value="AAS62886.1"/>
    <property type="status" value="ALT_INIT"/>
    <property type="molecule type" value="Genomic_DNA"/>
</dbReference>
<dbReference type="PIR" id="AF0344">
    <property type="entry name" value="AF0344"/>
</dbReference>
<dbReference type="RefSeq" id="WP_002209777.1">
    <property type="nucleotide sequence ID" value="NZ_WUCM01000037.1"/>
</dbReference>
<dbReference type="RefSeq" id="YP_002347768.1">
    <property type="nucleotide sequence ID" value="NC_003143.1"/>
</dbReference>
<dbReference type="SMR" id="Q8ZCX8"/>
<dbReference type="STRING" id="214092.YPO2828"/>
<dbReference type="PaxDb" id="214092-YPO2828"/>
<dbReference type="DNASU" id="1146354"/>
<dbReference type="EnsemblBacteria" id="AAS62886">
    <property type="protein sequence ID" value="AAS62886"/>
    <property type="gene ID" value="YP_2696"/>
</dbReference>
<dbReference type="GeneID" id="57975788"/>
<dbReference type="KEGG" id="ype:YPO2828"/>
<dbReference type="KEGG" id="ypk:y1407"/>
<dbReference type="KEGG" id="ypm:YP_2696"/>
<dbReference type="PATRIC" id="fig|214092.21.peg.3272"/>
<dbReference type="eggNOG" id="COG0150">
    <property type="taxonomic scope" value="Bacteria"/>
</dbReference>
<dbReference type="HOGENOM" id="CLU_047116_0_0_6"/>
<dbReference type="OMA" id="MTDYICV"/>
<dbReference type="OrthoDB" id="9777881at2"/>
<dbReference type="UniPathway" id="UPA00074">
    <property type="reaction ID" value="UER00129"/>
</dbReference>
<dbReference type="Proteomes" id="UP000000815">
    <property type="component" value="Chromosome"/>
</dbReference>
<dbReference type="Proteomes" id="UP000001019">
    <property type="component" value="Chromosome"/>
</dbReference>
<dbReference type="Proteomes" id="UP000002490">
    <property type="component" value="Chromosome"/>
</dbReference>
<dbReference type="GO" id="GO:0005829">
    <property type="term" value="C:cytosol"/>
    <property type="evidence" value="ECO:0000318"/>
    <property type="project" value="GO_Central"/>
</dbReference>
<dbReference type="GO" id="GO:0005524">
    <property type="term" value="F:ATP binding"/>
    <property type="evidence" value="ECO:0007669"/>
    <property type="project" value="UniProtKB-KW"/>
</dbReference>
<dbReference type="GO" id="GO:0004637">
    <property type="term" value="F:phosphoribosylamine-glycine ligase activity"/>
    <property type="evidence" value="ECO:0000318"/>
    <property type="project" value="GO_Central"/>
</dbReference>
<dbReference type="GO" id="GO:0004641">
    <property type="term" value="F:phosphoribosylformylglycinamidine cyclo-ligase activity"/>
    <property type="evidence" value="ECO:0000318"/>
    <property type="project" value="GO_Central"/>
</dbReference>
<dbReference type="GO" id="GO:0006189">
    <property type="term" value="P:'de novo' IMP biosynthetic process"/>
    <property type="evidence" value="ECO:0007669"/>
    <property type="project" value="UniProtKB-UniRule"/>
</dbReference>
<dbReference type="GO" id="GO:0046084">
    <property type="term" value="P:adenine biosynthetic process"/>
    <property type="evidence" value="ECO:0000318"/>
    <property type="project" value="GO_Central"/>
</dbReference>
<dbReference type="GO" id="GO:0006164">
    <property type="term" value="P:purine nucleotide biosynthetic process"/>
    <property type="evidence" value="ECO:0000318"/>
    <property type="project" value="GO_Central"/>
</dbReference>
<dbReference type="CDD" id="cd02196">
    <property type="entry name" value="PurM"/>
    <property type="match status" value="1"/>
</dbReference>
<dbReference type="FunFam" id="3.30.1330.10:FF:000001">
    <property type="entry name" value="Phosphoribosylformylglycinamidine cyclo-ligase"/>
    <property type="match status" value="1"/>
</dbReference>
<dbReference type="FunFam" id="3.90.650.10:FF:000001">
    <property type="entry name" value="Phosphoribosylformylglycinamidine cyclo-ligase"/>
    <property type="match status" value="1"/>
</dbReference>
<dbReference type="Gene3D" id="3.90.650.10">
    <property type="entry name" value="PurM-like C-terminal domain"/>
    <property type="match status" value="1"/>
</dbReference>
<dbReference type="Gene3D" id="3.30.1330.10">
    <property type="entry name" value="PurM-like, N-terminal domain"/>
    <property type="match status" value="1"/>
</dbReference>
<dbReference type="HAMAP" id="MF_00741">
    <property type="entry name" value="AIRS"/>
    <property type="match status" value="1"/>
</dbReference>
<dbReference type="InterPro" id="IPR010918">
    <property type="entry name" value="PurM-like_C_dom"/>
</dbReference>
<dbReference type="InterPro" id="IPR036676">
    <property type="entry name" value="PurM-like_C_sf"/>
</dbReference>
<dbReference type="InterPro" id="IPR016188">
    <property type="entry name" value="PurM-like_N"/>
</dbReference>
<dbReference type="InterPro" id="IPR036921">
    <property type="entry name" value="PurM-like_N_sf"/>
</dbReference>
<dbReference type="InterPro" id="IPR004733">
    <property type="entry name" value="PurM_cligase"/>
</dbReference>
<dbReference type="NCBIfam" id="TIGR00878">
    <property type="entry name" value="purM"/>
    <property type="match status" value="1"/>
</dbReference>
<dbReference type="PANTHER" id="PTHR10520:SF12">
    <property type="entry name" value="TRIFUNCTIONAL PURINE BIOSYNTHETIC PROTEIN ADENOSINE-3"/>
    <property type="match status" value="1"/>
</dbReference>
<dbReference type="PANTHER" id="PTHR10520">
    <property type="entry name" value="TRIFUNCTIONAL PURINE BIOSYNTHETIC PROTEIN ADENOSINE-3-RELATED"/>
    <property type="match status" value="1"/>
</dbReference>
<dbReference type="Pfam" id="PF00586">
    <property type="entry name" value="AIRS"/>
    <property type="match status" value="1"/>
</dbReference>
<dbReference type="Pfam" id="PF02769">
    <property type="entry name" value="AIRS_C"/>
    <property type="match status" value="1"/>
</dbReference>
<dbReference type="SUPFAM" id="SSF56042">
    <property type="entry name" value="PurM C-terminal domain-like"/>
    <property type="match status" value="1"/>
</dbReference>
<dbReference type="SUPFAM" id="SSF55326">
    <property type="entry name" value="PurM N-terminal domain-like"/>
    <property type="match status" value="1"/>
</dbReference>
<gene>
    <name evidence="1" type="primary">purM</name>
    <name type="synonym">purI</name>
    <name type="ordered locus">YPO2828</name>
    <name type="ordered locus">y1407</name>
    <name type="ordered locus">YP_2696</name>
</gene>
<sequence>MTNKTSLSYKDAGVDIDAGNDLVDRIKGVVKQTRRPEVMGGLGGFGALCALPQKYREPILVSGTDGVGTKLRLAMDLKRHDTIGIDLVAMCVNDLVVQGAEPLFFLDYFATGKLDVDTAASVITGIAEGCKQSGCALVGGETAEMPGMYHGDDYDVAGFCVGVVEKSEIIDGSKVTPGDVLVALGASGPHSNGYSLVRKILDVSNTNPEQTSLEGKSLADHLLEPTKIYVKSILSLIEQLDIHAIAHLTGGGFWENIPRVLPQGMQAVIDEASWQWPAVFSWLQQAGNVSRHEMYRTFNCGVGMVVALPAELADKAVELLTASGEKAWKIGVIAAATEGAEQVIINP</sequence>
<feature type="chain" id="PRO_0000148278" description="Phosphoribosylformylglycinamidine cyclo-ligase">
    <location>
        <begin position="1"/>
        <end position="347"/>
    </location>
</feature>
<name>PUR5_YERPE</name>
<comment type="catalytic activity">
    <reaction evidence="1">
        <text>2-formamido-N(1)-(5-O-phospho-beta-D-ribosyl)acetamidine + ATP = 5-amino-1-(5-phospho-beta-D-ribosyl)imidazole + ADP + phosphate + H(+)</text>
        <dbReference type="Rhea" id="RHEA:23032"/>
        <dbReference type="ChEBI" id="CHEBI:15378"/>
        <dbReference type="ChEBI" id="CHEBI:30616"/>
        <dbReference type="ChEBI" id="CHEBI:43474"/>
        <dbReference type="ChEBI" id="CHEBI:137981"/>
        <dbReference type="ChEBI" id="CHEBI:147287"/>
        <dbReference type="ChEBI" id="CHEBI:456216"/>
        <dbReference type="EC" id="6.3.3.1"/>
    </reaction>
</comment>
<comment type="pathway">
    <text evidence="1">Purine metabolism; IMP biosynthesis via de novo pathway; 5-amino-1-(5-phospho-D-ribosyl)imidazole from N(2)-formyl-N(1)-(5-phospho-D-ribosyl)glycinamide: step 2/2.</text>
</comment>
<comment type="subcellular location">
    <subcellularLocation>
        <location evidence="1">Cytoplasm</location>
    </subcellularLocation>
</comment>
<comment type="similarity">
    <text evidence="1">Belongs to the AIR synthase family.</text>
</comment>
<comment type="sequence caution" evidence="2">
    <conflict type="erroneous initiation">
        <sequence resource="EMBL-CDS" id="AAS62886"/>
    </conflict>
</comment>
<proteinExistence type="inferred from homology"/>
<accession>Q8ZCX8</accession>
<accession>Q0WD70</accession>
<protein>
    <recommendedName>
        <fullName evidence="1">Phosphoribosylformylglycinamidine cyclo-ligase</fullName>
        <ecNumber evidence="1">6.3.3.1</ecNumber>
    </recommendedName>
    <alternativeName>
        <fullName evidence="1">AIR synthase</fullName>
    </alternativeName>
    <alternativeName>
        <fullName evidence="1">AIRS</fullName>
    </alternativeName>
    <alternativeName>
        <fullName evidence="1">Phosphoribosyl-aminoimidazole synthetase</fullName>
    </alternativeName>
</protein>
<keyword id="KW-0067">ATP-binding</keyword>
<keyword id="KW-0963">Cytoplasm</keyword>
<keyword id="KW-0436">Ligase</keyword>
<keyword id="KW-0547">Nucleotide-binding</keyword>
<keyword id="KW-0658">Purine biosynthesis</keyword>
<keyword id="KW-1185">Reference proteome</keyword>
<reference key="1">
    <citation type="journal article" date="2001" name="Nature">
        <title>Genome sequence of Yersinia pestis, the causative agent of plague.</title>
        <authorList>
            <person name="Parkhill J."/>
            <person name="Wren B.W."/>
            <person name="Thomson N.R."/>
            <person name="Titball R.W."/>
            <person name="Holden M.T.G."/>
            <person name="Prentice M.B."/>
            <person name="Sebaihia M."/>
            <person name="James K.D."/>
            <person name="Churcher C.M."/>
            <person name="Mungall K.L."/>
            <person name="Baker S."/>
            <person name="Basham D."/>
            <person name="Bentley S.D."/>
            <person name="Brooks K."/>
            <person name="Cerdeno-Tarraga A.-M."/>
            <person name="Chillingworth T."/>
            <person name="Cronin A."/>
            <person name="Davies R.M."/>
            <person name="Davis P."/>
            <person name="Dougan G."/>
            <person name="Feltwell T."/>
            <person name="Hamlin N."/>
            <person name="Holroyd S."/>
            <person name="Jagels K."/>
            <person name="Karlyshev A.V."/>
            <person name="Leather S."/>
            <person name="Moule S."/>
            <person name="Oyston P.C.F."/>
            <person name="Quail M.A."/>
            <person name="Rutherford K.M."/>
            <person name="Simmonds M."/>
            <person name="Skelton J."/>
            <person name="Stevens K."/>
            <person name="Whitehead S."/>
            <person name="Barrell B.G."/>
        </authorList>
    </citation>
    <scope>NUCLEOTIDE SEQUENCE [LARGE SCALE GENOMIC DNA]</scope>
    <source>
        <strain>CO-92 / Biovar Orientalis</strain>
    </source>
</reference>
<reference key="2">
    <citation type="journal article" date="2002" name="J. Bacteriol.">
        <title>Genome sequence of Yersinia pestis KIM.</title>
        <authorList>
            <person name="Deng W."/>
            <person name="Burland V."/>
            <person name="Plunkett G. III"/>
            <person name="Boutin A."/>
            <person name="Mayhew G.F."/>
            <person name="Liss P."/>
            <person name="Perna N.T."/>
            <person name="Rose D.J."/>
            <person name="Mau B."/>
            <person name="Zhou S."/>
            <person name="Schwartz D.C."/>
            <person name="Fetherston J.D."/>
            <person name="Lindler L.E."/>
            <person name="Brubaker R.R."/>
            <person name="Plano G.V."/>
            <person name="Straley S.C."/>
            <person name="McDonough K.A."/>
            <person name="Nilles M.L."/>
            <person name="Matson J.S."/>
            <person name="Blattner F.R."/>
            <person name="Perry R.D."/>
        </authorList>
    </citation>
    <scope>NUCLEOTIDE SEQUENCE [LARGE SCALE GENOMIC DNA]</scope>
    <source>
        <strain>KIM10+ / Biovar Mediaevalis</strain>
    </source>
</reference>
<reference key="3">
    <citation type="journal article" date="2004" name="DNA Res.">
        <title>Complete genome sequence of Yersinia pestis strain 91001, an isolate avirulent to humans.</title>
        <authorList>
            <person name="Song Y."/>
            <person name="Tong Z."/>
            <person name="Wang J."/>
            <person name="Wang L."/>
            <person name="Guo Z."/>
            <person name="Han Y."/>
            <person name="Zhang J."/>
            <person name="Pei D."/>
            <person name="Zhou D."/>
            <person name="Qin H."/>
            <person name="Pang X."/>
            <person name="Han Y."/>
            <person name="Zhai J."/>
            <person name="Li M."/>
            <person name="Cui B."/>
            <person name="Qi Z."/>
            <person name="Jin L."/>
            <person name="Dai R."/>
            <person name="Chen F."/>
            <person name="Li S."/>
            <person name="Ye C."/>
            <person name="Du Z."/>
            <person name="Lin W."/>
            <person name="Wang J."/>
            <person name="Yu J."/>
            <person name="Yang H."/>
            <person name="Wang J."/>
            <person name="Huang P."/>
            <person name="Yang R."/>
        </authorList>
    </citation>
    <scope>NUCLEOTIDE SEQUENCE [LARGE SCALE GENOMIC DNA]</scope>
    <source>
        <strain>91001 / Biovar Mediaevalis</strain>
    </source>
</reference>
<evidence type="ECO:0000255" key="1">
    <source>
        <dbReference type="HAMAP-Rule" id="MF_00741"/>
    </source>
</evidence>
<evidence type="ECO:0000305" key="2"/>